<proteinExistence type="evidence at protein level"/>
<comment type="function">
    <text evidence="1">During mitosis, may be involved in the condensation of spindle midzone microtubules, leading to the formation of midbody.</text>
</comment>
<comment type="function">
    <text evidence="1">Essential for the formation and integrity of the midbody. Max play a critical role in the progress of mitosis and cytokinesis during cell cycle (By similarity).</text>
</comment>
<comment type="subunit">
    <text evidence="1">Interacts with AURKB.</text>
</comment>
<comment type="subcellular location">
    <subcellularLocation>
        <location evidence="1">Cytoplasm</location>
        <location evidence="1">Cytoskeleton</location>
    </subcellularLocation>
    <subcellularLocation>
        <location evidence="1">Cytoplasm</location>
        <location evidence="1">Cytoskeleton</location>
        <location evidence="1">Microtubule organizing center</location>
        <location evidence="1">Centrosome</location>
    </subcellularLocation>
    <subcellularLocation>
        <location evidence="1">Cytoplasm</location>
        <location evidence="1">Cytoskeleton</location>
        <location evidence="1">Spindle</location>
    </subcellularLocation>
    <subcellularLocation>
        <location evidence="1">Cytoplasm</location>
        <location evidence="1">Cytoskeleton</location>
        <location evidence="1">Spindle pole</location>
    </subcellularLocation>
    <subcellularLocation>
        <location evidence="1">Midbody</location>
    </subcellularLocation>
    <text evidence="1">At interphase, localizes to centrosomes. At prometaphase and metaphase, associated with spindle microtubules and spindle poles. At anaphase, accumulates in the spindle midzone. At telophase, condensed on central spindles. During cytokinesis, condensed on the midbody where it colocalizes with AURKB (By similarity).</text>
</comment>
<comment type="tissue specificity">
    <text evidence="4">Expressed in embryos at all stages examined. In adult tissues, detected in heart and at low levels in kidney and testis.</text>
</comment>
<comment type="sequence caution" evidence="5">
    <conflict type="erroneous initiation">
        <sequence resource="EMBL-CDS" id="AAH46779"/>
    </conflict>
    <text>Truncated N-terminus.</text>
</comment>
<comment type="sequence caution" evidence="5">
    <conflict type="erroneous initiation">
        <sequence resource="EMBL-CDS" id="AAH60735"/>
    </conflict>
    <text>Truncated N-terminus.</text>
</comment>
<comment type="sequence caution" evidence="5">
    <conflict type="miscellaneous discrepancy">
        <sequence resource="EMBL-CDS" id="BAC65709"/>
    </conflict>
    <text>Several sequencing errors and erroneous CDS prediction.</text>
</comment>
<accession>Q80XJ3</accession>
<accession>J3QM46</accession>
<accession>J3QQ36</accession>
<accession>Q6P9J6</accession>
<accession>Q80TL5</accession>
<accession>Q8BV10</accession>
<accession>Q8C0F2</accession>
<name>TTC28_MOUSE</name>
<keyword id="KW-0007">Acetylation</keyword>
<keyword id="KW-0131">Cell cycle</keyword>
<keyword id="KW-0132">Cell division</keyword>
<keyword id="KW-0963">Cytoplasm</keyword>
<keyword id="KW-0206">Cytoskeleton</keyword>
<keyword id="KW-0498">Mitosis</keyword>
<keyword id="KW-0597">Phosphoprotein</keyword>
<keyword id="KW-1185">Reference proteome</keyword>
<keyword id="KW-0677">Repeat</keyword>
<keyword id="KW-0802">TPR repeat</keyword>
<sequence length="2450" mass="267459">MEQPPPLAPEPASARSRRRREPESPPAPIPLFGARTVVQRSPDEPALSKAEFVEKVRQSNQACHDGDFHTAIVLYNEALAVDPQNCILYSNRSAAYMKTQQYHKALDDAIKARLLNPKWPKAYFRQGVALQYLGRHADALAAFASGLAQDPKSLQLLVGMVEAAMKSPMRDTLEPTYQQLQKMKLDKSPFVVVSVVGQELLTAGHHGASVVVLEAALKIGTCSLKLRGSVFSALSSAHWSLGNTEKSTGYMQQDLDVAKTLGDQTGECRAHGNLGSAFFSKGNYREALTNHRHQLVLAMKLKDREAASSALSSLGHVYTAIGDYPNALASHKQCVLLAKQSKDDLSEARELGNMGAVYIAMGDFENAVQCHEQHLRIAKDLGSKREEARAYSNLGSAYHYRRNFDKAMSYHNCVLELAQELMEKPIEMRAYAGLGHAARCMQDLERAKQYHEQQLGIAEDLKDRAAEGRASSNLGIIHQMKGDYDTALKLHKTHLCIAQELSDYAAQGRAYGNMGNAYNALGMYDQAVKYHRQELQISMEVNDRASQASTHGNLAVAYQALGAHDRALQHYQNHLNIARELRDIQSEARALSNLGNFHCSRGEYVQAAPYYEQYLRLAPDLQDMEGEGKVCHNLGYAHYCLGNYQEAVKYYEQDLALAKDLHDKLSQAKAYCNLGLAFKALLNFAKAEECQKYLLSLAQSLDNSQAKFRALGNLGDIFICKKDINGAIKFYEQQLGLSHHVKDRRLEASAYAALGTAYRMVQKYDKALGYHTQELEVYQELSDLPGECRAHGHLAAVYMALGKYTMAFKCYQEQLELGRKLKEPSLEAQVYGNMGITKMNMNVMEDAIGYFEQQLAMLQQLSGNESVLDRGRAYGNLGDCYEALGDYEEAIKYYEQYLSVAQSLNRMQDQAKAYRGLGNGHRATGSLQQALVCFEKRLVVAHELGEASNKAQAYGELGSLHSQLGNYEQAISCLERQLNIARDMKDRALESDAACGLGGVYQQMGEYDTALQYHQLDLQIAEETDNPTCQGRAYGNLGLTYESLGTFERAVVYQEQHLSIAAQMNDLVAKTVSYSSLGRTHHALQNYSQAVMYLQEGLRLAEQLGRREDEAKIRHGLGLSLWASGNLEEAQHQLYRASALFETIRHEAQLSTDYKLSLFDLQTSSYQALQRVLVSLGHHDEALAVAERGRTRAFADLLVERQTGQQDSDPYSPITIDQILEMVNAQRGLVLYYSLAAGYLYSWLLAPGAGILKFHEHYLGDNSVESSSDFQAGSSAALPVATNSTLEQHIASVREALGVESYYSRACASSETESEAGDIMEQQLEEMNKQLNSVTDPTGFLRMVRHNNLLHRSCQSMTSLFSGTVSPSKDGTSSLPRRQNSLAKPPLRALYDLLIAPMEGGLMHSSGPVGRHRQLVLVLEGELYFVPFALLKGSASNEYLYERFTLIAVPAVRSLGPHSKCHLRKTPPTYSSSTTMAAVIGNPKLPSAVMDRWLWGPMPSAEEEAFMVSELLGCQPLVGSMATKERVMSALTQAECVHFATHVSWKLSALVLTPNTEGNPAGSKSSFGHPYTIPESLRVQDDASDVESISDCPPLRELLLTAADLLDLRLSVKLVVLSSSQEANGRVTADGLVALTRAFLAAGAQCVLVALWPVPVAASKMFVHAFYSSLLNGLKASASLGEAMKVVQSSKAFSHPSNWAGFTLIGSDVKLNSPSSLIGQALTEILQHPERARDALRVLLHLVEKSLQRIQNGQRNAMYTSQQSVENKVGGIPGWQALLTAVGFRLDPAASGLPAAVFFPTSDPGDRLQQCSSTLQALLGLPNPALQALCKLITASETGEQLISRAVKNMVGMLHQVLVQLQACEKEQDFASAPIPVSLSVQLWRLPGCHEFLAALGFDLCEVGQEEVILKTGKQASRRTTHFALQSLLSLFDSTELPKRLSLDSSSSLESLASAQSVSNALPLGYQHPPFSPTGADSIASDAISVYSLSSIASSMSFVSKPEGGLEGGGPRGRQDYDRSKSTHPQRATLPRRQTSPQARRGASKEEEEYEGFSIISMEPLATYQGEGKTRFSPDPKQPCVKAPGGVRLSVSSKGSVSTPNSPVKMTLIPSPNSPFQKVGKLASSDTGESDQSSTETDSTVKSQEESTPKLDPQELAQRILEETKSHLLAVERLQRSGGPAGPDREDSVVAPSSTTVFRASETSAFSKPILSHQRSQLSPLTVKPQPPARSSSLPKVSSPATSEVSGKDGLSPPGSSHPSPGRDTPVSPADPPLFRLKYPSSPYSAHISKSPRNTSPACSAPSPALSYSSAGSARSSPADAPDEKVQAVHSLKMLWQSTPQPPRGPRKTCRGAPGTLTSKRDVLSLLNLSPRHGKEEGGADRLELKELSVQRHDEVPPKVPTNGHWCTDTATLTTAGGRSTTAAPRPLRLPLANGYKFLSPGRLFPSSKC</sequence>
<evidence type="ECO:0000250" key="1"/>
<evidence type="ECO:0000250" key="2">
    <source>
        <dbReference type="UniProtKB" id="Q96AY4"/>
    </source>
</evidence>
<evidence type="ECO:0000256" key="3">
    <source>
        <dbReference type="SAM" id="MobiDB-lite"/>
    </source>
</evidence>
<evidence type="ECO:0000269" key="4">
    <source>
    </source>
</evidence>
<evidence type="ECO:0000305" key="5"/>
<evidence type="ECO:0007744" key="6">
    <source>
    </source>
</evidence>
<gene>
    <name type="primary">Ttc28</name>
    <name type="synonym">Kiaa1043</name>
    <name type="synonym">Tprbk</name>
</gene>
<feature type="chain" id="PRO_0000106428" description="Tetratricopeptide repeat protein 28">
    <location>
        <begin position="1"/>
        <end position="2450"/>
    </location>
</feature>
<feature type="repeat" description="TPR 1">
    <location>
        <begin position="52"/>
        <end position="85"/>
    </location>
</feature>
<feature type="repeat" description="TPR 2">
    <location>
        <begin position="87"/>
        <end position="119"/>
    </location>
</feature>
<feature type="repeat" description="TPR 3">
    <location>
        <begin position="120"/>
        <end position="153"/>
    </location>
</feature>
<feature type="repeat" description="TPR 4">
    <location>
        <begin position="190"/>
        <end position="223"/>
    </location>
</feature>
<feature type="repeat" description="TPR 5">
    <location>
        <begin position="228"/>
        <end position="261"/>
    </location>
</feature>
<feature type="repeat" description="TPR 6">
    <location>
        <begin position="268"/>
        <end position="301"/>
    </location>
</feature>
<feature type="repeat" description="TPR 7">
    <location>
        <begin position="308"/>
        <end position="341"/>
    </location>
</feature>
<feature type="repeat" description="TPR 8">
    <location>
        <begin position="348"/>
        <end position="381"/>
    </location>
</feature>
<feature type="repeat" description="TPR 9">
    <location>
        <begin position="388"/>
        <end position="421"/>
    </location>
</feature>
<feature type="repeat" description="TPR 10">
    <location>
        <begin position="428"/>
        <end position="461"/>
    </location>
</feature>
<feature type="repeat" description="TPR 11">
    <location>
        <begin position="468"/>
        <end position="501"/>
    </location>
</feature>
<feature type="repeat" description="TPR 12">
    <location>
        <begin position="508"/>
        <end position="541"/>
    </location>
</feature>
<feature type="repeat" description="TPR 13">
    <location>
        <begin position="548"/>
        <end position="581"/>
    </location>
</feature>
<feature type="repeat" description="TPR 14">
    <location>
        <begin position="588"/>
        <end position="621"/>
    </location>
</feature>
<feature type="repeat" description="TPR 15">
    <location>
        <begin position="628"/>
        <end position="661"/>
    </location>
</feature>
<feature type="repeat" description="TPR 16">
    <location>
        <begin position="668"/>
        <end position="701"/>
    </location>
</feature>
<feature type="repeat" description="TPR 17">
    <location>
        <begin position="708"/>
        <end position="741"/>
    </location>
</feature>
<feature type="repeat" description="TPR 18">
    <location>
        <begin position="748"/>
        <end position="781"/>
    </location>
</feature>
<feature type="repeat" description="TPR 19">
    <location>
        <begin position="788"/>
        <end position="821"/>
    </location>
</feature>
<feature type="repeat" description="TPR 20">
    <location>
        <begin position="828"/>
        <end position="861"/>
    </location>
</feature>
<feature type="repeat" description="TPR 21">
    <location>
        <begin position="871"/>
        <end position="904"/>
    </location>
</feature>
<feature type="repeat" description="TPR 22">
    <location>
        <begin position="911"/>
        <end position="944"/>
    </location>
</feature>
<feature type="repeat" description="TPR 23">
    <location>
        <begin position="951"/>
        <end position="984"/>
    </location>
</feature>
<feature type="repeat" description="TPR 24">
    <location>
        <begin position="991"/>
        <end position="1024"/>
    </location>
</feature>
<feature type="repeat" description="TPR 25">
    <location>
        <begin position="1031"/>
        <end position="1064"/>
    </location>
</feature>
<feature type="repeat" description="TPR 26">
    <location>
        <begin position="1071"/>
        <end position="1104"/>
    </location>
</feature>
<feature type="repeat" description="TPR 27">
    <location>
        <begin position="1111"/>
        <end position="1144"/>
    </location>
</feature>
<feature type="repeat" description="TPR 28">
    <location>
        <begin position="1163"/>
        <end position="1196"/>
    </location>
</feature>
<feature type="region of interest" description="Disordered" evidence="3">
    <location>
        <begin position="1"/>
        <end position="36"/>
    </location>
</feature>
<feature type="region of interest" description="Disordered" evidence="3">
    <location>
        <begin position="1362"/>
        <end position="1381"/>
    </location>
</feature>
<feature type="region of interest" description="Disordered" evidence="3">
    <location>
        <begin position="2001"/>
        <end position="2364"/>
    </location>
</feature>
<feature type="compositionally biased region" description="Polar residues" evidence="3">
    <location>
        <begin position="2090"/>
        <end position="2116"/>
    </location>
</feature>
<feature type="compositionally biased region" description="Low complexity" evidence="3">
    <location>
        <begin position="2124"/>
        <end position="2140"/>
    </location>
</feature>
<feature type="compositionally biased region" description="Basic and acidic residues" evidence="3">
    <location>
        <begin position="2143"/>
        <end position="2153"/>
    </location>
</feature>
<feature type="compositionally biased region" description="Polar residues" evidence="3">
    <location>
        <begin position="2191"/>
        <end position="2206"/>
    </location>
</feature>
<feature type="compositionally biased region" description="Polar residues" evidence="3">
    <location>
        <begin position="2229"/>
        <end position="2245"/>
    </location>
</feature>
<feature type="compositionally biased region" description="Low complexity" evidence="3">
    <location>
        <begin position="2252"/>
        <end position="2262"/>
    </location>
</feature>
<feature type="compositionally biased region" description="Low complexity" evidence="3">
    <location>
        <begin position="2296"/>
        <end position="2320"/>
    </location>
</feature>
<feature type="modified residue" description="N-acetylmethionine" evidence="2">
    <location>
        <position position="1"/>
    </location>
</feature>
<feature type="modified residue" description="Phosphoserine" evidence="2">
    <location>
        <position position="24"/>
    </location>
</feature>
<feature type="modified residue" description="Phosphoserine" evidence="6">
    <location>
        <position position="1584"/>
    </location>
</feature>
<feature type="modified residue" description="Phosphoserine" evidence="2">
    <location>
        <position position="2098"/>
    </location>
</feature>
<feature type="modified residue" description="Phosphoserine" evidence="2">
    <location>
        <position position="2216"/>
    </location>
</feature>
<feature type="modified residue" description="Phosphoserine" evidence="2">
    <location>
        <position position="2365"/>
    </location>
</feature>
<feature type="modified residue" description="Phosphoserine" evidence="2">
    <location>
        <position position="2370"/>
    </location>
</feature>
<feature type="sequence conflict" description="In Ref. 5; BAC27414." evidence="5" ref="5">
    <original>V</original>
    <variation>L</variation>
    <location>
        <position position="1769"/>
    </location>
</feature>
<organism>
    <name type="scientific">Mus musculus</name>
    <name type="common">Mouse</name>
    <dbReference type="NCBI Taxonomy" id="10090"/>
    <lineage>
        <taxon>Eukaryota</taxon>
        <taxon>Metazoa</taxon>
        <taxon>Chordata</taxon>
        <taxon>Craniata</taxon>
        <taxon>Vertebrata</taxon>
        <taxon>Euteleostomi</taxon>
        <taxon>Mammalia</taxon>
        <taxon>Eutheria</taxon>
        <taxon>Euarchontoglires</taxon>
        <taxon>Glires</taxon>
        <taxon>Rodentia</taxon>
        <taxon>Myomorpha</taxon>
        <taxon>Muroidea</taxon>
        <taxon>Muridae</taxon>
        <taxon>Murinae</taxon>
        <taxon>Mus</taxon>
        <taxon>Mus</taxon>
    </lineage>
</organism>
<reference key="1">
    <citation type="journal article" date="2009" name="PLoS Biol.">
        <title>Lineage-specific biology revealed by a finished genome assembly of the mouse.</title>
        <authorList>
            <person name="Church D.M."/>
            <person name="Goodstadt L."/>
            <person name="Hillier L.W."/>
            <person name="Zody M.C."/>
            <person name="Goldstein S."/>
            <person name="She X."/>
            <person name="Bult C.J."/>
            <person name="Agarwala R."/>
            <person name="Cherry J.L."/>
            <person name="DiCuccio M."/>
            <person name="Hlavina W."/>
            <person name="Kapustin Y."/>
            <person name="Meric P."/>
            <person name="Maglott D."/>
            <person name="Birtle Z."/>
            <person name="Marques A.C."/>
            <person name="Graves T."/>
            <person name="Zhou S."/>
            <person name="Teague B."/>
            <person name="Potamousis K."/>
            <person name="Churas C."/>
            <person name="Place M."/>
            <person name="Herschleb J."/>
            <person name="Runnheim R."/>
            <person name="Forrest D."/>
            <person name="Amos-Landgraf J."/>
            <person name="Schwartz D.C."/>
            <person name="Cheng Z."/>
            <person name="Lindblad-Toh K."/>
            <person name="Eichler E.E."/>
            <person name="Ponting C.P."/>
        </authorList>
    </citation>
    <scope>NUCLEOTIDE SEQUENCE [LARGE SCALE GENOMIC DNA]</scope>
    <source>
        <strain>C57BL/6J</strain>
    </source>
</reference>
<reference key="2">
    <citation type="journal article" date="2004" name="Genome Res.">
        <title>The status, quality, and expansion of the NIH full-length cDNA project: the Mammalian Gene Collection (MGC).</title>
        <authorList>
            <consortium name="The MGC Project Team"/>
        </authorList>
    </citation>
    <scope>NUCLEOTIDE SEQUENCE [LARGE SCALE MRNA] OF 746-2450</scope>
    <source>
        <strain>C57BL/6J</strain>
        <tissue>Brain</tissue>
    </source>
</reference>
<reference key="3">
    <citation type="journal article" date="2003" name="DNA Res.">
        <title>Prediction of the coding sequences of mouse homologues of KIAA gene: II. The complete nucleotide sequences of 400 mouse KIAA-homologous cDNAs identified by screening of terminal sequences of cDNA clones randomly sampled from size-fractionated libraries.</title>
        <authorList>
            <person name="Okazaki N."/>
            <person name="Kikuno R."/>
            <person name="Ohara R."/>
            <person name="Inamoto S."/>
            <person name="Aizawa H."/>
            <person name="Yuasa S."/>
            <person name="Nakajima D."/>
            <person name="Nagase T."/>
            <person name="Ohara O."/>
            <person name="Koga H."/>
        </authorList>
    </citation>
    <scope>NUCLEOTIDE SEQUENCE [LARGE SCALE MRNA] OF 780-2450</scope>
    <source>
        <tissue>Brain</tissue>
    </source>
</reference>
<reference key="4">
    <citation type="submission" date="2003-08" db="EMBL/GenBank/DDBJ databases">
        <authorList>
            <person name="Okazaki N."/>
            <person name="Kikuno R."/>
            <person name="Nagase T."/>
            <person name="Ohara O."/>
            <person name="Koga H."/>
        </authorList>
    </citation>
    <scope>SEQUENCE REVISION</scope>
</reference>
<reference key="5">
    <citation type="journal article" date="2005" name="Science">
        <title>The transcriptional landscape of the mammalian genome.</title>
        <authorList>
            <person name="Carninci P."/>
            <person name="Kasukawa T."/>
            <person name="Katayama S."/>
            <person name="Gough J."/>
            <person name="Frith M.C."/>
            <person name="Maeda N."/>
            <person name="Oyama R."/>
            <person name="Ravasi T."/>
            <person name="Lenhard B."/>
            <person name="Wells C."/>
            <person name="Kodzius R."/>
            <person name="Shimokawa K."/>
            <person name="Bajic V.B."/>
            <person name="Brenner S.E."/>
            <person name="Batalov S."/>
            <person name="Forrest A.R."/>
            <person name="Zavolan M."/>
            <person name="Davis M.J."/>
            <person name="Wilming L.G."/>
            <person name="Aidinis V."/>
            <person name="Allen J.E."/>
            <person name="Ambesi-Impiombato A."/>
            <person name="Apweiler R."/>
            <person name="Aturaliya R.N."/>
            <person name="Bailey T.L."/>
            <person name="Bansal M."/>
            <person name="Baxter L."/>
            <person name="Beisel K.W."/>
            <person name="Bersano T."/>
            <person name="Bono H."/>
            <person name="Chalk A.M."/>
            <person name="Chiu K.P."/>
            <person name="Choudhary V."/>
            <person name="Christoffels A."/>
            <person name="Clutterbuck D.R."/>
            <person name="Crowe M.L."/>
            <person name="Dalla E."/>
            <person name="Dalrymple B.P."/>
            <person name="de Bono B."/>
            <person name="Della Gatta G."/>
            <person name="di Bernardo D."/>
            <person name="Down T."/>
            <person name="Engstrom P."/>
            <person name="Fagiolini M."/>
            <person name="Faulkner G."/>
            <person name="Fletcher C.F."/>
            <person name="Fukushima T."/>
            <person name="Furuno M."/>
            <person name="Futaki S."/>
            <person name="Gariboldi M."/>
            <person name="Georgii-Hemming P."/>
            <person name="Gingeras T.R."/>
            <person name="Gojobori T."/>
            <person name="Green R.E."/>
            <person name="Gustincich S."/>
            <person name="Harbers M."/>
            <person name="Hayashi Y."/>
            <person name="Hensch T.K."/>
            <person name="Hirokawa N."/>
            <person name="Hill D."/>
            <person name="Huminiecki L."/>
            <person name="Iacono M."/>
            <person name="Ikeo K."/>
            <person name="Iwama A."/>
            <person name="Ishikawa T."/>
            <person name="Jakt M."/>
            <person name="Kanapin A."/>
            <person name="Katoh M."/>
            <person name="Kawasawa Y."/>
            <person name="Kelso J."/>
            <person name="Kitamura H."/>
            <person name="Kitano H."/>
            <person name="Kollias G."/>
            <person name="Krishnan S.P."/>
            <person name="Kruger A."/>
            <person name="Kummerfeld S.K."/>
            <person name="Kurochkin I.V."/>
            <person name="Lareau L.F."/>
            <person name="Lazarevic D."/>
            <person name="Lipovich L."/>
            <person name="Liu J."/>
            <person name="Liuni S."/>
            <person name="McWilliam S."/>
            <person name="Madan Babu M."/>
            <person name="Madera M."/>
            <person name="Marchionni L."/>
            <person name="Matsuda H."/>
            <person name="Matsuzawa S."/>
            <person name="Miki H."/>
            <person name="Mignone F."/>
            <person name="Miyake S."/>
            <person name="Morris K."/>
            <person name="Mottagui-Tabar S."/>
            <person name="Mulder N."/>
            <person name="Nakano N."/>
            <person name="Nakauchi H."/>
            <person name="Ng P."/>
            <person name="Nilsson R."/>
            <person name="Nishiguchi S."/>
            <person name="Nishikawa S."/>
            <person name="Nori F."/>
            <person name="Ohara O."/>
            <person name="Okazaki Y."/>
            <person name="Orlando V."/>
            <person name="Pang K.C."/>
            <person name="Pavan W.J."/>
            <person name="Pavesi G."/>
            <person name="Pesole G."/>
            <person name="Petrovsky N."/>
            <person name="Piazza S."/>
            <person name="Reed J."/>
            <person name="Reid J.F."/>
            <person name="Ring B.Z."/>
            <person name="Ringwald M."/>
            <person name="Rost B."/>
            <person name="Ruan Y."/>
            <person name="Salzberg S.L."/>
            <person name="Sandelin A."/>
            <person name="Schneider C."/>
            <person name="Schoenbach C."/>
            <person name="Sekiguchi K."/>
            <person name="Semple C.A."/>
            <person name="Seno S."/>
            <person name="Sessa L."/>
            <person name="Sheng Y."/>
            <person name="Shibata Y."/>
            <person name="Shimada H."/>
            <person name="Shimada K."/>
            <person name="Silva D."/>
            <person name="Sinclair B."/>
            <person name="Sperling S."/>
            <person name="Stupka E."/>
            <person name="Sugiura K."/>
            <person name="Sultana R."/>
            <person name="Takenaka Y."/>
            <person name="Taki K."/>
            <person name="Tammoja K."/>
            <person name="Tan S.L."/>
            <person name="Tang S."/>
            <person name="Taylor M.S."/>
            <person name="Tegner J."/>
            <person name="Teichmann S.A."/>
            <person name="Ueda H.R."/>
            <person name="van Nimwegen E."/>
            <person name="Verardo R."/>
            <person name="Wei C.L."/>
            <person name="Yagi K."/>
            <person name="Yamanishi H."/>
            <person name="Zabarovsky E."/>
            <person name="Zhu S."/>
            <person name="Zimmer A."/>
            <person name="Hide W."/>
            <person name="Bult C."/>
            <person name="Grimmond S.M."/>
            <person name="Teasdale R.D."/>
            <person name="Liu E.T."/>
            <person name="Brusic V."/>
            <person name="Quackenbush J."/>
            <person name="Wahlestedt C."/>
            <person name="Mattick J.S."/>
            <person name="Hume D.A."/>
            <person name="Kai C."/>
            <person name="Sasaki D."/>
            <person name="Tomaru Y."/>
            <person name="Fukuda S."/>
            <person name="Kanamori-Katayama M."/>
            <person name="Suzuki M."/>
            <person name="Aoki J."/>
            <person name="Arakawa T."/>
            <person name="Iida J."/>
            <person name="Imamura K."/>
            <person name="Itoh M."/>
            <person name="Kato T."/>
            <person name="Kawaji H."/>
            <person name="Kawagashira N."/>
            <person name="Kawashima T."/>
            <person name="Kojima M."/>
            <person name="Kondo S."/>
            <person name="Konno H."/>
            <person name="Nakano K."/>
            <person name="Ninomiya N."/>
            <person name="Nishio T."/>
            <person name="Okada M."/>
            <person name="Plessy C."/>
            <person name="Shibata K."/>
            <person name="Shiraki T."/>
            <person name="Suzuki S."/>
            <person name="Tagami M."/>
            <person name="Waki K."/>
            <person name="Watahiki A."/>
            <person name="Okamura-Oho Y."/>
            <person name="Suzuki H."/>
            <person name="Kawai J."/>
            <person name="Hayashizaki Y."/>
        </authorList>
    </citation>
    <scope>NUCLEOTIDE SEQUENCE [LARGE SCALE MRNA] OF 1769-2450</scope>
    <source>
        <strain>C57BL/6J</strain>
        <tissue>Embryonic head</tissue>
        <tissue>Embryonic testis</tissue>
    </source>
</reference>
<reference key="6">
    <citation type="journal article" date="2010" name="Cell">
        <title>A tissue-specific atlas of mouse protein phosphorylation and expression.</title>
        <authorList>
            <person name="Huttlin E.L."/>
            <person name="Jedrychowski M.P."/>
            <person name="Elias J.E."/>
            <person name="Goswami T."/>
            <person name="Rad R."/>
            <person name="Beausoleil S.A."/>
            <person name="Villen J."/>
            <person name="Haas W."/>
            <person name="Sowa M.E."/>
            <person name="Gygi S.P."/>
        </authorList>
    </citation>
    <scope>PHOSPHORYLATION [LARGE SCALE ANALYSIS] AT SER-1584</scope>
    <scope>IDENTIFICATION BY MASS SPECTROMETRY [LARGE SCALE ANALYSIS]</scope>
    <source>
        <tissue>Brain</tissue>
        <tissue>Kidney</tissue>
        <tissue>Lung</tissue>
        <tissue>Testis</tissue>
    </source>
</reference>
<reference key="7">
    <citation type="journal article" date="2012" name="Gene">
        <title>A novel big protein TPRBK possessing 25 units of TPR motif is essential for the progress of mitosis and cytokinesis.</title>
        <authorList>
            <person name="Izumiyama T."/>
            <person name="Minoshima S."/>
            <person name="Yoshida T."/>
            <person name="Shimizu N."/>
        </authorList>
    </citation>
    <scope>TISSUE SPECIFICITY</scope>
</reference>
<dbReference type="EMBL" id="AC121934">
    <property type="status" value="NOT_ANNOTATED_CDS"/>
    <property type="molecule type" value="Genomic_DNA"/>
</dbReference>
<dbReference type="EMBL" id="AC122226">
    <property type="status" value="NOT_ANNOTATED_CDS"/>
    <property type="molecule type" value="Genomic_DNA"/>
</dbReference>
<dbReference type="EMBL" id="AC124425">
    <property type="status" value="NOT_ANNOTATED_CDS"/>
    <property type="molecule type" value="Genomic_DNA"/>
</dbReference>
<dbReference type="EMBL" id="AC147632">
    <property type="status" value="NOT_ANNOTATED_CDS"/>
    <property type="molecule type" value="Genomic_DNA"/>
</dbReference>
<dbReference type="EMBL" id="AC155173">
    <property type="status" value="NOT_ANNOTATED_CDS"/>
    <property type="molecule type" value="Genomic_DNA"/>
</dbReference>
<dbReference type="EMBL" id="BC046779">
    <property type="protein sequence ID" value="AAH46779.2"/>
    <property type="status" value="ALT_INIT"/>
    <property type="molecule type" value="mRNA"/>
</dbReference>
<dbReference type="EMBL" id="BC060735">
    <property type="protein sequence ID" value="AAH60735.1"/>
    <property type="status" value="ALT_INIT"/>
    <property type="molecule type" value="mRNA"/>
</dbReference>
<dbReference type="EMBL" id="AK122427">
    <property type="protein sequence ID" value="BAC65709.2"/>
    <property type="status" value="ALT_SEQ"/>
    <property type="molecule type" value="mRNA"/>
</dbReference>
<dbReference type="EMBL" id="AK031458">
    <property type="protein sequence ID" value="BAC27414.1"/>
    <property type="molecule type" value="mRNA"/>
</dbReference>
<dbReference type="EMBL" id="AK081382">
    <property type="protein sequence ID" value="BAC38208.1"/>
    <property type="molecule type" value="mRNA"/>
</dbReference>
<dbReference type="CCDS" id="CCDS59682.1"/>
<dbReference type="RefSeq" id="NP_001254551.1">
    <property type="nucleotide sequence ID" value="NM_001267622.1"/>
</dbReference>
<dbReference type="SMR" id="Q80XJ3"/>
<dbReference type="BioGRID" id="229101">
    <property type="interactions" value="3"/>
</dbReference>
<dbReference type="FunCoup" id="Q80XJ3">
    <property type="interactions" value="678"/>
</dbReference>
<dbReference type="IntAct" id="Q80XJ3">
    <property type="interactions" value="2"/>
</dbReference>
<dbReference type="STRING" id="10090.ENSMUSP00000137609"/>
<dbReference type="iPTMnet" id="Q80XJ3"/>
<dbReference type="PhosphoSitePlus" id="Q80XJ3"/>
<dbReference type="PaxDb" id="10090-ENSMUSP00000136116"/>
<dbReference type="PeptideAtlas" id="Q80XJ3"/>
<dbReference type="ProteomicsDB" id="297674"/>
<dbReference type="Pumba" id="Q80XJ3"/>
<dbReference type="Antibodypedia" id="5496">
    <property type="antibodies" value="8 antibodies from 6 providers"/>
</dbReference>
<dbReference type="DNASU" id="209683"/>
<dbReference type="Ensembl" id="ENSMUST00000156290.9">
    <property type="protein sequence ID" value="ENSMUSP00000137609.2"/>
    <property type="gene ID" value="ENSMUSG00000033209.18"/>
</dbReference>
<dbReference type="GeneID" id="209683"/>
<dbReference type="KEGG" id="mmu:209683"/>
<dbReference type="UCSC" id="uc033ild.1">
    <property type="organism name" value="mouse"/>
</dbReference>
<dbReference type="AGR" id="MGI:2140873"/>
<dbReference type="CTD" id="23331"/>
<dbReference type="MGI" id="MGI:2140873">
    <property type="gene designation" value="Ttc28"/>
</dbReference>
<dbReference type="VEuPathDB" id="HostDB:ENSMUSG00000033209"/>
<dbReference type="eggNOG" id="KOG0548">
    <property type="taxonomic scope" value="Eukaryota"/>
</dbReference>
<dbReference type="GeneTree" id="ENSGT00940000156428"/>
<dbReference type="InParanoid" id="Q80XJ3"/>
<dbReference type="OrthoDB" id="626167at2759"/>
<dbReference type="TreeFam" id="TF328344"/>
<dbReference type="BioGRID-ORCS" id="209683">
    <property type="hits" value="6 hits in 75 CRISPR screens"/>
</dbReference>
<dbReference type="ChiTaRS" id="Ttc28">
    <property type="organism name" value="mouse"/>
</dbReference>
<dbReference type="PRO" id="PR:Q80XJ3"/>
<dbReference type="Proteomes" id="UP000000589">
    <property type="component" value="Chromosome 5"/>
</dbReference>
<dbReference type="RNAct" id="Q80XJ3">
    <property type="molecule type" value="protein"/>
</dbReference>
<dbReference type="Bgee" id="ENSMUSG00000033209">
    <property type="expression patterns" value="Expressed in rostral migratory stream and 243 other cell types or tissues"/>
</dbReference>
<dbReference type="ExpressionAtlas" id="Q80XJ3">
    <property type="expression patterns" value="baseline and differential"/>
</dbReference>
<dbReference type="GO" id="GO:0005813">
    <property type="term" value="C:centrosome"/>
    <property type="evidence" value="ECO:0000266"/>
    <property type="project" value="MGI"/>
</dbReference>
<dbReference type="GO" id="GO:0005737">
    <property type="term" value="C:cytoplasm"/>
    <property type="evidence" value="ECO:0007669"/>
    <property type="project" value="UniProtKB-KW"/>
</dbReference>
<dbReference type="GO" id="GO:0030496">
    <property type="term" value="C:midbody"/>
    <property type="evidence" value="ECO:0000266"/>
    <property type="project" value="MGI"/>
</dbReference>
<dbReference type="GO" id="GO:0072686">
    <property type="term" value="C:mitotic spindle"/>
    <property type="evidence" value="ECO:0000266"/>
    <property type="project" value="MGI"/>
</dbReference>
<dbReference type="GO" id="GO:1990023">
    <property type="term" value="C:mitotic spindle midzone"/>
    <property type="evidence" value="ECO:0000266"/>
    <property type="project" value="MGI"/>
</dbReference>
<dbReference type="GO" id="GO:0097431">
    <property type="term" value="C:mitotic spindle pole"/>
    <property type="evidence" value="ECO:0000266"/>
    <property type="project" value="MGI"/>
</dbReference>
<dbReference type="GO" id="GO:0051301">
    <property type="term" value="P:cell division"/>
    <property type="evidence" value="ECO:0007669"/>
    <property type="project" value="UniProtKB-KW"/>
</dbReference>
<dbReference type="GO" id="GO:0007346">
    <property type="term" value="P:regulation of mitotic cell cycle"/>
    <property type="evidence" value="ECO:0000266"/>
    <property type="project" value="MGI"/>
</dbReference>
<dbReference type="FunFam" id="1.25.40.10:FF:000040">
    <property type="entry name" value="Tetratricopeptide repeat domain 28"/>
    <property type="match status" value="1"/>
</dbReference>
<dbReference type="FunFam" id="1.25.40.10:FF:000056">
    <property type="entry name" value="Tetratricopeptide repeat domain 28"/>
    <property type="match status" value="1"/>
</dbReference>
<dbReference type="FunFam" id="1.25.40.10:FF:000096">
    <property type="entry name" value="Tetratricopeptide repeat domain 28"/>
    <property type="match status" value="1"/>
</dbReference>
<dbReference type="FunFam" id="1.25.40.10:FF:000209">
    <property type="entry name" value="Tetratricopeptide repeat domain 28"/>
    <property type="match status" value="1"/>
</dbReference>
<dbReference type="FunFam" id="1.25.40.10:FF:000286">
    <property type="entry name" value="Tetratricopeptide repeat domain 28"/>
    <property type="match status" value="1"/>
</dbReference>
<dbReference type="FunFam" id="1.25.40.10:FF:001762">
    <property type="entry name" value="Tetratricopeptide repeat domain 28"/>
    <property type="match status" value="1"/>
</dbReference>
<dbReference type="Gene3D" id="1.25.40.10">
    <property type="entry name" value="Tetratricopeptide repeat domain"/>
    <property type="match status" value="6"/>
</dbReference>
<dbReference type="InterPro" id="IPR024983">
    <property type="entry name" value="CHAT_dom"/>
</dbReference>
<dbReference type="InterPro" id="IPR011990">
    <property type="entry name" value="TPR-like_helical_dom_sf"/>
</dbReference>
<dbReference type="InterPro" id="IPR019734">
    <property type="entry name" value="TPR_rpt"/>
</dbReference>
<dbReference type="PANTHER" id="PTHR10098">
    <property type="entry name" value="RAPSYN-RELATED"/>
    <property type="match status" value="1"/>
</dbReference>
<dbReference type="PANTHER" id="PTHR10098:SF108">
    <property type="entry name" value="TETRATRICOPEPTIDE REPEAT PROTEIN 28"/>
    <property type="match status" value="1"/>
</dbReference>
<dbReference type="Pfam" id="PF12770">
    <property type="entry name" value="CHAT"/>
    <property type="match status" value="1"/>
</dbReference>
<dbReference type="Pfam" id="PF13424">
    <property type="entry name" value="TPR_12"/>
    <property type="match status" value="10"/>
</dbReference>
<dbReference type="Pfam" id="PF13176">
    <property type="entry name" value="TPR_7"/>
    <property type="match status" value="1"/>
</dbReference>
<dbReference type="SMART" id="SM00028">
    <property type="entry name" value="TPR"/>
    <property type="match status" value="25"/>
</dbReference>
<dbReference type="SUPFAM" id="SSF48452">
    <property type="entry name" value="TPR-like"/>
    <property type="match status" value="7"/>
</dbReference>
<dbReference type="PROSITE" id="PS50005">
    <property type="entry name" value="TPR"/>
    <property type="match status" value="25"/>
</dbReference>
<dbReference type="PROSITE" id="PS50293">
    <property type="entry name" value="TPR_REGION"/>
    <property type="match status" value="1"/>
</dbReference>
<protein>
    <recommendedName>
        <fullName>Tetratricopeptide repeat protein 28</fullName>
        <shortName>TPR repeat protein 28</shortName>
    </recommendedName>
</protein>